<dbReference type="EMBL" id="CP001285">
    <property type="protein sequence ID" value="ACK92787.1"/>
    <property type="molecule type" value="Genomic_DNA"/>
</dbReference>
<dbReference type="KEGG" id="bcu:BCAH820_B0138"/>
<dbReference type="HOGENOM" id="CLU_163819_0_0_9"/>
<dbReference type="Proteomes" id="UP000001363">
    <property type="component" value="Plasmid pAH820_272"/>
</dbReference>
<dbReference type="InterPro" id="IPR016772">
    <property type="entry name" value="UCP020408"/>
</dbReference>
<dbReference type="Pfam" id="PF10087">
    <property type="entry name" value="DUF2325"/>
    <property type="match status" value="1"/>
</dbReference>
<name>Y5938_BACC0</name>
<accession>B7JTN6</accession>
<evidence type="ECO:0000305" key="1"/>
<protein>
    <recommendedName>
        <fullName>UPF0751 protein BCAH820_B0138</fullName>
    </recommendedName>
</protein>
<sequence>MSTILVLGGSNGRTLEKLAKKRDCQVIFHDGKNHGGVKKTFRSVIKKCDVIVVQKGACGHVSIDVAKEYAKKYDVPLLFNQGFGGTGALEIGLKHLQAA</sequence>
<feature type="chain" id="PRO_0000383579" description="UPF0751 protein BCAH820_B0138">
    <location>
        <begin position="1"/>
        <end position="99"/>
    </location>
</feature>
<proteinExistence type="inferred from homology"/>
<comment type="similarity">
    <text evidence="1">Belongs to the UPF0751 family.</text>
</comment>
<reference key="1">
    <citation type="submission" date="2008-10" db="EMBL/GenBank/DDBJ databases">
        <title>Genome sequence of Bacillus cereus AH820.</title>
        <authorList>
            <person name="Dodson R.J."/>
            <person name="Durkin A.S."/>
            <person name="Rosovitz M.J."/>
            <person name="Rasko D.A."/>
            <person name="Hoffmaster A."/>
            <person name="Ravel J."/>
            <person name="Sutton G."/>
        </authorList>
    </citation>
    <scope>NUCLEOTIDE SEQUENCE [LARGE SCALE GENOMIC DNA]</scope>
    <source>
        <strain>AH820</strain>
    </source>
</reference>
<gene>
    <name type="ordered locus">BCAH820_B0138</name>
</gene>
<keyword id="KW-0614">Plasmid</keyword>
<geneLocation type="plasmid">
    <name>pAH820_272</name>
</geneLocation>
<organism>
    <name type="scientific">Bacillus cereus (strain AH820)</name>
    <dbReference type="NCBI Taxonomy" id="405535"/>
    <lineage>
        <taxon>Bacteria</taxon>
        <taxon>Bacillati</taxon>
        <taxon>Bacillota</taxon>
        <taxon>Bacilli</taxon>
        <taxon>Bacillales</taxon>
        <taxon>Bacillaceae</taxon>
        <taxon>Bacillus</taxon>
        <taxon>Bacillus cereus group</taxon>
    </lineage>
</organism>